<accession>Q67IA6</accession>
<geneLocation type="chloroplast"/>
<gene>
    <name evidence="1" type="primary">ndhB</name>
</gene>
<sequence>MIWHVQNENFILDSTRIFMKAFHLLLFHGSFIFPECILIFGLILLLMIDSTSDQKDRPWFYFISSTSLVMSITALLFRWKEEPIISFSGNFQTNNFNEIFQFLILLCSTLCIPLSVEYIECTEMAITEFLLFVLTATLGGMFLCGANDXITIFVAPECFSLCSYLLSGYTKRDVRSNEATTKYLLMGGASSSILVHGFSWLYGSSGGEIELQEIVNGLINTQMYNSPGISIALISITVGIGFKLSPAPFHQWTPDVYEGSPTPVVAFLSVTSKVAASASATRIFDIPFYFSSNEWHLLLEILAILSMILGNLIAITQTSMKRMLAYSSIGQIGYVIIGIIVGDSNDGYASMITYMLFYISMNLGTFARIVSFGLRTGTDNIRDYAGLYTKDPFLALSSALCLLSLGGLPPLAGFFGKLHLFWCGWQAGLYFLVSIGLLTSVVSIYYYLKIIKLLMTGRNQEITPHVRNYRRSPLKSNNSIEWSMTVCVIAXTIPGISMNPILAIAQDTLF</sequence>
<feature type="chain" id="PRO_0000225347" description="NAD(P)H-quinone oxidoreductase subunit 2, chloroplastic">
    <location>
        <begin position="1"/>
        <end position="510"/>
    </location>
</feature>
<feature type="transmembrane region" description="Helical" evidence="1">
    <location>
        <begin position="24"/>
        <end position="44"/>
    </location>
</feature>
<feature type="transmembrane region" description="Helical" evidence="1">
    <location>
        <begin position="59"/>
        <end position="79"/>
    </location>
</feature>
<feature type="transmembrane region" description="Helical" evidence="1">
    <location>
        <begin position="99"/>
        <end position="119"/>
    </location>
</feature>
<feature type="transmembrane region" description="Helical" evidence="1">
    <location>
        <begin position="124"/>
        <end position="144"/>
    </location>
</feature>
<feature type="transmembrane region" description="Helical" evidence="1">
    <location>
        <begin position="149"/>
        <end position="169"/>
    </location>
</feature>
<feature type="transmembrane region" description="Helical" evidence="1">
    <location>
        <begin position="183"/>
        <end position="203"/>
    </location>
</feature>
<feature type="transmembrane region" description="Helical" evidence="1">
    <location>
        <begin position="229"/>
        <end position="249"/>
    </location>
</feature>
<feature type="transmembrane region" description="Helical" evidence="1">
    <location>
        <begin position="295"/>
        <end position="315"/>
    </location>
</feature>
<feature type="transmembrane region" description="Helical" evidence="1">
    <location>
        <begin position="323"/>
        <end position="343"/>
    </location>
</feature>
<feature type="transmembrane region" description="Helical" evidence="1">
    <location>
        <begin position="347"/>
        <end position="367"/>
    </location>
</feature>
<feature type="transmembrane region" description="Helical" evidence="1">
    <location>
        <begin position="395"/>
        <end position="415"/>
    </location>
</feature>
<feature type="transmembrane region" description="Helical" evidence="1">
    <location>
        <begin position="418"/>
        <end position="438"/>
    </location>
</feature>
<feature type="transmembrane region" description="Helical" evidence="1">
    <location>
        <begin position="484"/>
        <end position="504"/>
    </location>
</feature>
<comment type="function">
    <text evidence="1">NDH shuttles electrons from NAD(P)H:plastoquinone, via FMN and iron-sulfur (Fe-S) centers, to quinones in the photosynthetic chain and possibly in a chloroplast respiratory chain. The immediate electron acceptor for the enzyme in this species is believed to be plastoquinone. Couples the redox reaction to proton translocation, and thus conserves the redox energy in a proton gradient.</text>
</comment>
<comment type="catalytic activity">
    <reaction evidence="1">
        <text>a plastoquinone + NADH + (n+1) H(+)(in) = a plastoquinol + NAD(+) + n H(+)(out)</text>
        <dbReference type="Rhea" id="RHEA:42608"/>
        <dbReference type="Rhea" id="RHEA-COMP:9561"/>
        <dbReference type="Rhea" id="RHEA-COMP:9562"/>
        <dbReference type="ChEBI" id="CHEBI:15378"/>
        <dbReference type="ChEBI" id="CHEBI:17757"/>
        <dbReference type="ChEBI" id="CHEBI:57540"/>
        <dbReference type="ChEBI" id="CHEBI:57945"/>
        <dbReference type="ChEBI" id="CHEBI:62192"/>
    </reaction>
</comment>
<comment type="catalytic activity">
    <reaction evidence="1">
        <text>a plastoquinone + NADPH + (n+1) H(+)(in) = a plastoquinol + NADP(+) + n H(+)(out)</text>
        <dbReference type="Rhea" id="RHEA:42612"/>
        <dbReference type="Rhea" id="RHEA-COMP:9561"/>
        <dbReference type="Rhea" id="RHEA-COMP:9562"/>
        <dbReference type="ChEBI" id="CHEBI:15378"/>
        <dbReference type="ChEBI" id="CHEBI:17757"/>
        <dbReference type="ChEBI" id="CHEBI:57783"/>
        <dbReference type="ChEBI" id="CHEBI:58349"/>
        <dbReference type="ChEBI" id="CHEBI:62192"/>
    </reaction>
</comment>
<comment type="subunit">
    <text evidence="1">NDH is composed of at least 16 different subunits, 5 of which are encoded in the nucleus.</text>
</comment>
<comment type="subcellular location">
    <subcellularLocation>
        <location evidence="1">Plastid</location>
        <location evidence="1">Chloroplast thylakoid membrane</location>
        <topology evidence="1">Multi-pass membrane protein</topology>
    </subcellularLocation>
</comment>
<comment type="similarity">
    <text evidence="1">Belongs to the complex I subunit 2 family.</text>
</comment>
<comment type="sequence caution" evidence="2">
    <conflict type="erroneous initiation">
        <sequence resource="EMBL-CDS" id="AAN32097"/>
    </conflict>
</comment>
<protein>
    <recommendedName>
        <fullName evidence="1">NAD(P)H-quinone oxidoreductase subunit 2, chloroplastic</fullName>
        <ecNumber evidence="1">7.1.1.-</ecNumber>
    </recommendedName>
    <alternativeName>
        <fullName evidence="1">NAD(P)H dehydrogenase, subunit 2</fullName>
    </alternativeName>
    <alternativeName>
        <fullName evidence="1">NADH-plastoquinone oxidoreductase subunit 2</fullName>
    </alternativeName>
</protein>
<proteinExistence type="inferred from homology"/>
<reference key="1">
    <citation type="submission" date="2002-09" db="EMBL/GenBank/DDBJ databases">
        <title>Phylogenetic relationships among the major lineages of Asparagales based on a large chloroplast data set.</title>
        <authorList>
            <person name="McPherson M.A."/>
            <person name="Rai H.S."/>
            <person name="Wong W.A."/>
            <person name="Graham S.W."/>
        </authorList>
    </citation>
    <scope>NUCLEOTIDE SEQUENCE [GENOMIC DNA]</scope>
</reference>
<keyword id="KW-0150">Chloroplast</keyword>
<keyword id="KW-0472">Membrane</keyword>
<keyword id="KW-0520">NAD</keyword>
<keyword id="KW-0521">NADP</keyword>
<keyword id="KW-0934">Plastid</keyword>
<keyword id="KW-0618">Plastoquinone</keyword>
<keyword id="KW-0874">Quinone</keyword>
<keyword id="KW-0793">Thylakoid</keyword>
<keyword id="KW-1278">Translocase</keyword>
<keyword id="KW-0812">Transmembrane</keyword>
<keyword id="KW-1133">Transmembrane helix</keyword>
<keyword id="KW-0813">Transport</keyword>
<organism>
    <name type="scientific">Narcissus elegans</name>
    <name type="common">Daffodil</name>
    <name type="synonym">Hermione elegans</name>
    <dbReference type="NCBI Taxonomy" id="54847"/>
    <lineage>
        <taxon>Eukaryota</taxon>
        <taxon>Viridiplantae</taxon>
        <taxon>Streptophyta</taxon>
        <taxon>Embryophyta</taxon>
        <taxon>Tracheophyta</taxon>
        <taxon>Spermatophyta</taxon>
        <taxon>Magnoliopsida</taxon>
        <taxon>Liliopsida</taxon>
        <taxon>Asparagales</taxon>
        <taxon>Amaryllidaceae</taxon>
        <taxon>Amaryllidoideae</taxon>
        <taxon>Narcissus</taxon>
    </lineage>
</organism>
<name>NU2C_NAREL</name>
<dbReference type="EC" id="7.1.1.-" evidence="1"/>
<dbReference type="EMBL" id="AY147497">
    <property type="protein sequence ID" value="AAN32097.1"/>
    <property type="status" value="ALT_INIT"/>
    <property type="molecule type" value="Genomic_DNA"/>
</dbReference>
<dbReference type="GO" id="GO:0009535">
    <property type="term" value="C:chloroplast thylakoid membrane"/>
    <property type="evidence" value="ECO:0007669"/>
    <property type="project" value="UniProtKB-SubCell"/>
</dbReference>
<dbReference type="GO" id="GO:0008137">
    <property type="term" value="F:NADH dehydrogenase (ubiquinone) activity"/>
    <property type="evidence" value="ECO:0007669"/>
    <property type="project" value="InterPro"/>
</dbReference>
<dbReference type="GO" id="GO:0048038">
    <property type="term" value="F:quinone binding"/>
    <property type="evidence" value="ECO:0007669"/>
    <property type="project" value="UniProtKB-KW"/>
</dbReference>
<dbReference type="GO" id="GO:0042773">
    <property type="term" value="P:ATP synthesis coupled electron transport"/>
    <property type="evidence" value="ECO:0007669"/>
    <property type="project" value="InterPro"/>
</dbReference>
<dbReference type="GO" id="GO:0019684">
    <property type="term" value="P:photosynthesis, light reaction"/>
    <property type="evidence" value="ECO:0007669"/>
    <property type="project" value="UniProtKB-UniRule"/>
</dbReference>
<dbReference type="HAMAP" id="MF_00445">
    <property type="entry name" value="NDH1_NuoN_1"/>
    <property type="match status" value="1"/>
</dbReference>
<dbReference type="InterPro" id="IPR010096">
    <property type="entry name" value="NADH-Q_OxRdtase_suN/2"/>
</dbReference>
<dbReference type="InterPro" id="IPR001750">
    <property type="entry name" value="ND/Mrp_TM"/>
</dbReference>
<dbReference type="InterPro" id="IPR045693">
    <property type="entry name" value="Ndh2_N"/>
</dbReference>
<dbReference type="NCBIfam" id="TIGR01770">
    <property type="entry name" value="NDH_I_N"/>
    <property type="match status" value="1"/>
</dbReference>
<dbReference type="NCBIfam" id="NF002701">
    <property type="entry name" value="PRK02504.1"/>
    <property type="match status" value="1"/>
</dbReference>
<dbReference type="PANTHER" id="PTHR22773">
    <property type="entry name" value="NADH DEHYDROGENASE"/>
    <property type="match status" value="1"/>
</dbReference>
<dbReference type="Pfam" id="PF19530">
    <property type="entry name" value="Ndh2_N"/>
    <property type="match status" value="1"/>
</dbReference>
<dbReference type="Pfam" id="PF00361">
    <property type="entry name" value="Proton_antipo_M"/>
    <property type="match status" value="1"/>
</dbReference>
<dbReference type="PRINTS" id="PR01434">
    <property type="entry name" value="NADHDHGNASE5"/>
</dbReference>
<evidence type="ECO:0000255" key="1">
    <source>
        <dbReference type="HAMAP-Rule" id="MF_00445"/>
    </source>
</evidence>
<evidence type="ECO:0000305" key="2"/>